<sequence>MFKKIMKGANRKASKAEANDSSMYGFDPPGRSGPGSNMIVNHASRGSLVPSSPNSMAAATTQPPPMYSVEPLPLFRDVSVSERQSLFLRKLQICCFQFDFTDTLKNAREKEIKRQTLLELVDFIQSGAGKLTEVCQEEMVKMISVNIFRCLPPASHENTGQEPADLEEEEPYLEPSWPHLQLIYELLLRYIVPSDTDTKVAKRYIDHSFVLRLLELFETEDPREREYLKTILHRIYGKFMVHRPFIRKAMNHIFYRFIYETERHSGIGELLEILGSIINGFALPMKEEHKLFLIRALIPLHKPKPIAMYHQQLSYCIVQFVEKDYKLADTVIRGLLKFWPVTNCTKEVLFLGELEEVLEATQTVEFQRCMVPLFQQIARCLSSSNFQVAERALFLWNNEHVVGLIAQNRGVILPIIFASLEKNIESHWNQAVHGLSANIKRMFMEMDPELFEECQQQYEEKQAKSKQVEEQRQNRWRRLDEAVEEREREDPMITS</sequence>
<feature type="chain" id="PRO_0000071460" description="Serine/threonine protein phosphatase 2A 57 kDa regulatory subunit B' alpha isoform">
    <location>
        <begin position="1"/>
        <end position="495"/>
    </location>
</feature>
<feature type="region of interest" description="Disordered" evidence="2">
    <location>
        <begin position="1"/>
        <end position="61"/>
    </location>
</feature>
<feature type="region of interest" description="Disordered" evidence="2">
    <location>
        <begin position="462"/>
        <end position="495"/>
    </location>
</feature>
<feature type="compositionally biased region" description="Basic residues" evidence="2">
    <location>
        <begin position="1"/>
        <end position="13"/>
    </location>
</feature>
<feature type="compositionally biased region" description="Polar residues" evidence="2">
    <location>
        <begin position="49"/>
        <end position="61"/>
    </location>
</feature>
<evidence type="ECO:0000250" key="1">
    <source>
        <dbReference type="UniProtKB" id="Q13362"/>
    </source>
</evidence>
<evidence type="ECO:0000256" key="2">
    <source>
        <dbReference type="SAM" id="MobiDB-lite"/>
    </source>
</evidence>
<evidence type="ECO:0000269" key="3">
    <source>
    </source>
</evidence>
<evidence type="ECO:0000269" key="4">
    <source>
    </source>
</evidence>
<evidence type="ECO:0000269" key="5">
    <source>
    </source>
</evidence>
<evidence type="ECO:0000269" key="6">
    <source>
    </source>
</evidence>
<evidence type="ECO:0000305" key="7"/>
<evidence type="ECO:0000305" key="8">
    <source>
    </source>
</evidence>
<gene>
    <name type="primary">B'ALPHA</name>
    <name type="ordered locus">At5g03470</name>
    <name type="ORF">F12E4.240</name>
</gene>
<organism>
    <name type="scientific">Arabidopsis thaliana</name>
    <name type="common">Mouse-ear cress</name>
    <dbReference type="NCBI Taxonomy" id="3702"/>
    <lineage>
        <taxon>Eukaryota</taxon>
        <taxon>Viridiplantae</taxon>
        <taxon>Streptophyta</taxon>
        <taxon>Embryophyta</taxon>
        <taxon>Tracheophyta</taxon>
        <taxon>Spermatophyta</taxon>
        <taxon>Magnoliopsida</taxon>
        <taxon>eudicotyledons</taxon>
        <taxon>Gunneridae</taxon>
        <taxon>Pentapetalae</taxon>
        <taxon>rosids</taxon>
        <taxon>malvids</taxon>
        <taxon>Brassicales</taxon>
        <taxon>Brassicaceae</taxon>
        <taxon>Camelineae</taxon>
        <taxon>Arabidopsis</taxon>
    </lineage>
</organism>
<keyword id="KW-1070">Brassinosteroid signaling pathway</keyword>
<keyword id="KW-0963">Cytoplasm</keyword>
<keyword id="KW-0539">Nucleus</keyword>
<keyword id="KW-1185">Reference proteome</keyword>
<dbReference type="EMBL" id="U73526">
    <property type="protein sequence ID" value="AAB58900.1"/>
    <property type="molecule type" value="mRNA"/>
</dbReference>
<dbReference type="EMBL" id="AL162751">
    <property type="protein sequence ID" value="CAB83307.1"/>
    <property type="molecule type" value="Genomic_DNA"/>
</dbReference>
<dbReference type="EMBL" id="CP002688">
    <property type="protein sequence ID" value="AED90609.1"/>
    <property type="molecule type" value="Genomic_DNA"/>
</dbReference>
<dbReference type="EMBL" id="BT002933">
    <property type="protein sequence ID" value="AAO22747.1"/>
    <property type="molecule type" value="mRNA"/>
</dbReference>
<dbReference type="PIR" id="T48372">
    <property type="entry name" value="T48372"/>
</dbReference>
<dbReference type="RefSeq" id="NP_195967.1">
    <property type="nucleotide sequence ID" value="NM_120427.3"/>
</dbReference>
<dbReference type="SMR" id="O04375"/>
<dbReference type="BioGRID" id="17104">
    <property type="interactions" value="3"/>
</dbReference>
<dbReference type="FunCoup" id="O04375">
    <property type="interactions" value="3513"/>
</dbReference>
<dbReference type="STRING" id="3702.O04375"/>
<dbReference type="PaxDb" id="3702-AT5G03470.1"/>
<dbReference type="ProteomicsDB" id="245146"/>
<dbReference type="EnsemblPlants" id="AT5G03470.1">
    <property type="protein sequence ID" value="AT5G03470.1"/>
    <property type="gene ID" value="AT5G03470"/>
</dbReference>
<dbReference type="GeneID" id="831828"/>
<dbReference type="Gramene" id="AT5G03470.1">
    <property type="protein sequence ID" value="AT5G03470.1"/>
    <property type="gene ID" value="AT5G03470"/>
</dbReference>
<dbReference type="KEGG" id="ath:AT5G03470"/>
<dbReference type="Araport" id="AT5G03470"/>
<dbReference type="TAIR" id="AT5G03470">
    <property type="gene designation" value="ATB' ALPHA"/>
</dbReference>
<dbReference type="eggNOG" id="KOG2085">
    <property type="taxonomic scope" value="Eukaryota"/>
</dbReference>
<dbReference type="HOGENOM" id="CLU_012437_4_1_1"/>
<dbReference type="InParanoid" id="O04375"/>
<dbReference type="OMA" id="EREDPMI"/>
<dbReference type="OrthoDB" id="10264446at2759"/>
<dbReference type="PhylomeDB" id="O04375"/>
<dbReference type="PRO" id="PR:O04375"/>
<dbReference type="Proteomes" id="UP000006548">
    <property type="component" value="Chromosome 5"/>
</dbReference>
<dbReference type="ExpressionAtlas" id="O04375">
    <property type="expression patterns" value="baseline and differential"/>
</dbReference>
<dbReference type="GO" id="GO:0005737">
    <property type="term" value="C:cytoplasm"/>
    <property type="evidence" value="ECO:0000314"/>
    <property type="project" value="UniProtKB"/>
</dbReference>
<dbReference type="GO" id="GO:0005634">
    <property type="term" value="C:nucleus"/>
    <property type="evidence" value="ECO:0000314"/>
    <property type="project" value="UniProtKB"/>
</dbReference>
<dbReference type="GO" id="GO:0000159">
    <property type="term" value="C:protein phosphatase type 2A complex"/>
    <property type="evidence" value="ECO:0000250"/>
    <property type="project" value="TAIR"/>
</dbReference>
<dbReference type="GO" id="GO:0019888">
    <property type="term" value="F:protein phosphatase regulator activity"/>
    <property type="evidence" value="ECO:0007669"/>
    <property type="project" value="InterPro"/>
</dbReference>
<dbReference type="GO" id="GO:0009742">
    <property type="term" value="P:brassinosteroid mediated signaling pathway"/>
    <property type="evidence" value="ECO:0007669"/>
    <property type="project" value="UniProtKB-KW"/>
</dbReference>
<dbReference type="GO" id="GO:0009554">
    <property type="term" value="P:megasporogenesis"/>
    <property type="evidence" value="ECO:0000316"/>
    <property type="project" value="TAIR"/>
</dbReference>
<dbReference type="GO" id="GO:0051177">
    <property type="term" value="P:meiotic sister chromatid cohesion"/>
    <property type="evidence" value="ECO:0000316"/>
    <property type="project" value="TAIR"/>
</dbReference>
<dbReference type="GO" id="GO:0009556">
    <property type="term" value="P:microsporogenesis"/>
    <property type="evidence" value="ECO:0000316"/>
    <property type="project" value="TAIR"/>
</dbReference>
<dbReference type="GO" id="GO:0042325">
    <property type="term" value="P:regulation of phosphorylation"/>
    <property type="evidence" value="ECO:0000250"/>
    <property type="project" value="TAIR"/>
</dbReference>
<dbReference type="FunFam" id="1.25.10.10:FF:000041">
    <property type="entry name" value="Serine/threonine protein phosphatase 2A regulatory subunit"/>
    <property type="match status" value="1"/>
</dbReference>
<dbReference type="Gene3D" id="1.25.10.10">
    <property type="entry name" value="Leucine-rich Repeat Variant"/>
    <property type="match status" value="1"/>
</dbReference>
<dbReference type="InterPro" id="IPR011989">
    <property type="entry name" value="ARM-like"/>
</dbReference>
<dbReference type="InterPro" id="IPR016024">
    <property type="entry name" value="ARM-type_fold"/>
</dbReference>
<dbReference type="InterPro" id="IPR002554">
    <property type="entry name" value="PP2A_B56"/>
</dbReference>
<dbReference type="PANTHER" id="PTHR10257">
    <property type="entry name" value="SERINE/THREONINE PROTEIN PHOSPHATASE 2A PP2A REGULATORY SUBUNIT B"/>
    <property type="match status" value="1"/>
</dbReference>
<dbReference type="PANTHER" id="PTHR10257:SF71">
    <property type="entry name" value="SERINE_THREONINE PROTEIN PHOSPHATASE 2A 57 KDA REGULATORY SUBUNIT B' ALPHA ISOFORM"/>
    <property type="match status" value="1"/>
</dbReference>
<dbReference type="Pfam" id="PF01603">
    <property type="entry name" value="B56"/>
    <property type="match status" value="1"/>
</dbReference>
<dbReference type="PIRSF" id="PIRSF028043">
    <property type="entry name" value="PP2A_B56"/>
    <property type="match status" value="1"/>
</dbReference>
<dbReference type="SUPFAM" id="SSF48371">
    <property type="entry name" value="ARM repeat"/>
    <property type="match status" value="1"/>
</dbReference>
<reference key="1">
    <citation type="journal article" date="1997" name="Eur. J. Biochem.">
        <title>Differential expression of three Arabidopsis genes encoding the B' regulatory subunit of protein phosphatase 2A.</title>
        <authorList>
            <person name="Latorre K.A."/>
            <person name="Harris D.M."/>
            <person name="Rundle S.J."/>
        </authorList>
    </citation>
    <scope>NUCLEOTIDE SEQUENCE [MRNA]</scope>
    <scope>TISSUE SPECIFICITY</scope>
</reference>
<reference key="2">
    <citation type="journal article" date="2000" name="Nature">
        <title>Sequence and analysis of chromosome 5 of the plant Arabidopsis thaliana.</title>
        <authorList>
            <person name="Tabata S."/>
            <person name="Kaneko T."/>
            <person name="Nakamura Y."/>
            <person name="Kotani H."/>
            <person name="Kato T."/>
            <person name="Asamizu E."/>
            <person name="Miyajima N."/>
            <person name="Sasamoto S."/>
            <person name="Kimura T."/>
            <person name="Hosouchi T."/>
            <person name="Kawashima K."/>
            <person name="Kohara M."/>
            <person name="Matsumoto M."/>
            <person name="Matsuno A."/>
            <person name="Muraki A."/>
            <person name="Nakayama S."/>
            <person name="Nakazaki N."/>
            <person name="Naruo K."/>
            <person name="Okumura S."/>
            <person name="Shinpo S."/>
            <person name="Takeuchi C."/>
            <person name="Wada T."/>
            <person name="Watanabe A."/>
            <person name="Yamada M."/>
            <person name="Yasuda M."/>
            <person name="Sato S."/>
            <person name="de la Bastide M."/>
            <person name="Huang E."/>
            <person name="Spiegel L."/>
            <person name="Gnoj L."/>
            <person name="O'Shaughnessy A."/>
            <person name="Preston R."/>
            <person name="Habermann K."/>
            <person name="Murray J."/>
            <person name="Johnson D."/>
            <person name="Rohlfing T."/>
            <person name="Nelson J."/>
            <person name="Stoneking T."/>
            <person name="Pepin K."/>
            <person name="Spieth J."/>
            <person name="Sekhon M."/>
            <person name="Armstrong J."/>
            <person name="Becker M."/>
            <person name="Belter E."/>
            <person name="Cordum H."/>
            <person name="Cordes M."/>
            <person name="Courtney L."/>
            <person name="Courtney W."/>
            <person name="Dante M."/>
            <person name="Du H."/>
            <person name="Edwards J."/>
            <person name="Fryman J."/>
            <person name="Haakensen B."/>
            <person name="Lamar E."/>
            <person name="Latreille P."/>
            <person name="Leonard S."/>
            <person name="Meyer R."/>
            <person name="Mulvaney E."/>
            <person name="Ozersky P."/>
            <person name="Riley A."/>
            <person name="Strowmatt C."/>
            <person name="Wagner-McPherson C."/>
            <person name="Wollam A."/>
            <person name="Yoakum M."/>
            <person name="Bell M."/>
            <person name="Dedhia N."/>
            <person name="Parnell L."/>
            <person name="Shah R."/>
            <person name="Rodriguez M."/>
            <person name="Hoon See L."/>
            <person name="Vil D."/>
            <person name="Baker J."/>
            <person name="Kirchoff K."/>
            <person name="Toth K."/>
            <person name="King L."/>
            <person name="Bahret A."/>
            <person name="Miller B."/>
            <person name="Marra M.A."/>
            <person name="Martienssen R."/>
            <person name="McCombie W.R."/>
            <person name="Wilson R.K."/>
            <person name="Murphy G."/>
            <person name="Bancroft I."/>
            <person name="Volckaert G."/>
            <person name="Wambutt R."/>
            <person name="Duesterhoeft A."/>
            <person name="Stiekema W."/>
            <person name="Pohl T."/>
            <person name="Entian K.-D."/>
            <person name="Terryn N."/>
            <person name="Hartley N."/>
            <person name="Bent E."/>
            <person name="Johnson S."/>
            <person name="Langham S.-A."/>
            <person name="McCullagh B."/>
            <person name="Robben J."/>
            <person name="Grymonprez B."/>
            <person name="Zimmermann W."/>
            <person name="Ramsperger U."/>
            <person name="Wedler H."/>
            <person name="Balke K."/>
            <person name="Wedler E."/>
            <person name="Peters S."/>
            <person name="van Staveren M."/>
            <person name="Dirkse W."/>
            <person name="Mooijman P."/>
            <person name="Klein Lankhorst R."/>
            <person name="Weitzenegger T."/>
            <person name="Bothe G."/>
            <person name="Rose M."/>
            <person name="Hauf J."/>
            <person name="Berneiser S."/>
            <person name="Hempel S."/>
            <person name="Feldpausch M."/>
            <person name="Lamberth S."/>
            <person name="Villarroel R."/>
            <person name="Gielen J."/>
            <person name="Ardiles W."/>
            <person name="Bents O."/>
            <person name="Lemcke K."/>
            <person name="Kolesov G."/>
            <person name="Mayer K.F.X."/>
            <person name="Rudd S."/>
            <person name="Schoof H."/>
            <person name="Schueller C."/>
            <person name="Zaccaria P."/>
            <person name="Mewes H.-W."/>
            <person name="Bevan M."/>
            <person name="Fransz P.F."/>
        </authorList>
    </citation>
    <scope>NUCLEOTIDE SEQUENCE [LARGE SCALE GENOMIC DNA]</scope>
    <source>
        <strain>cv. Columbia</strain>
    </source>
</reference>
<reference key="3">
    <citation type="journal article" date="2017" name="Plant J.">
        <title>Araport11: a complete reannotation of the Arabidopsis thaliana reference genome.</title>
        <authorList>
            <person name="Cheng C.Y."/>
            <person name="Krishnakumar V."/>
            <person name="Chan A.P."/>
            <person name="Thibaud-Nissen F."/>
            <person name="Schobel S."/>
            <person name="Town C.D."/>
        </authorList>
    </citation>
    <scope>GENOME REANNOTATION</scope>
    <source>
        <strain>cv. Columbia</strain>
    </source>
</reference>
<reference key="4">
    <citation type="journal article" date="2003" name="Science">
        <title>Empirical analysis of transcriptional activity in the Arabidopsis genome.</title>
        <authorList>
            <person name="Yamada K."/>
            <person name="Lim J."/>
            <person name="Dale J.M."/>
            <person name="Chen H."/>
            <person name="Shinn P."/>
            <person name="Palm C.J."/>
            <person name="Southwick A.M."/>
            <person name="Wu H.C."/>
            <person name="Kim C.J."/>
            <person name="Nguyen M."/>
            <person name="Pham P.K."/>
            <person name="Cheuk R.F."/>
            <person name="Karlin-Newmann G."/>
            <person name="Liu S.X."/>
            <person name="Lam B."/>
            <person name="Sakano H."/>
            <person name="Wu T."/>
            <person name="Yu G."/>
            <person name="Miranda M."/>
            <person name="Quach H.L."/>
            <person name="Tripp M."/>
            <person name="Chang C.H."/>
            <person name="Lee J.M."/>
            <person name="Toriumi M.J."/>
            <person name="Chan M.M."/>
            <person name="Tang C.C."/>
            <person name="Onodera C.S."/>
            <person name="Deng J.M."/>
            <person name="Akiyama K."/>
            <person name="Ansari Y."/>
            <person name="Arakawa T."/>
            <person name="Banh J."/>
            <person name="Banno F."/>
            <person name="Bowser L."/>
            <person name="Brooks S.Y."/>
            <person name="Carninci P."/>
            <person name="Chao Q."/>
            <person name="Choy N."/>
            <person name="Enju A."/>
            <person name="Goldsmith A.D."/>
            <person name="Gurjal M."/>
            <person name="Hansen N.F."/>
            <person name="Hayashizaki Y."/>
            <person name="Johnson-Hopson C."/>
            <person name="Hsuan V.W."/>
            <person name="Iida K."/>
            <person name="Karnes M."/>
            <person name="Khan S."/>
            <person name="Koesema E."/>
            <person name="Ishida J."/>
            <person name="Jiang P.X."/>
            <person name="Jones T."/>
            <person name="Kawai J."/>
            <person name="Kamiya A."/>
            <person name="Meyers C."/>
            <person name="Nakajima M."/>
            <person name="Narusaka M."/>
            <person name="Seki M."/>
            <person name="Sakurai T."/>
            <person name="Satou M."/>
            <person name="Tamse R."/>
            <person name="Vaysberg M."/>
            <person name="Wallender E.K."/>
            <person name="Wong C."/>
            <person name="Yamamura Y."/>
            <person name="Yuan S."/>
            <person name="Shinozaki K."/>
            <person name="Davis R.W."/>
            <person name="Theologis A."/>
            <person name="Ecker J.R."/>
        </authorList>
    </citation>
    <scope>NUCLEOTIDE SEQUENCE [LARGE SCALE MRNA]</scope>
    <source>
        <strain>cv. Columbia</strain>
    </source>
</reference>
<reference key="5">
    <citation type="journal article" date="1999" name="Eur. J. Biochem.">
        <title>Molecular characterization of the B' regulatory subunit gene family of Arabidopsis protein phosphatase 2A.</title>
        <authorList>
            <person name="Haynes J.G."/>
            <person name="Hartung A.J."/>
            <person name="Hendershot J.D. III"/>
            <person name="Passingham R.S."/>
            <person name="Rundle S.J."/>
        </authorList>
    </citation>
    <scope>INTERACTION WITH PP2AA1</scope>
</reference>
<reference key="6">
    <citation type="journal article" date="2002" name="Plant Physiol.">
        <title>Molecular characterization and evolution of the protein phosphatase 2A B' regulatory subunit family in plants.</title>
        <authorList>
            <person name="Terol J."/>
            <person name="Bargues M."/>
            <person name="Carrasco P."/>
            <person name="Perez-Alonso M."/>
            <person name="Paricio N."/>
        </authorList>
    </citation>
    <scope>NOMENCLATURE</scope>
</reference>
<reference key="7">
    <citation type="journal article" date="2011" name="Nat. Cell Biol.">
        <title>PP2A activates brassinosteroid-responsive gene expression and plant growth by dephosphorylating BZR1.</title>
        <authorList>
            <person name="Tang W."/>
            <person name="Yuan M."/>
            <person name="Wang R."/>
            <person name="Yang Y."/>
            <person name="Wang C."/>
            <person name="Oses-Prieto J.A."/>
            <person name="Kim T.W."/>
            <person name="Zhou H.W."/>
            <person name="Deng Z."/>
            <person name="Gampala S.S."/>
            <person name="Gendron J.M."/>
            <person name="Jonassen E.M."/>
            <person name="Lillo C."/>
            <person name="DeLong A."/>
            <person name="Burlingame A.L."/>
            <person name="Sun Y."/>
            <person name="Wang Z.Y."/>
        </authorList>
    </citation>
    <scope>FUNCTION</scope>
    <scope>INTERACTION WITH BZR1</scope>
</reference>
<reference key="8">
    <citation type="journal article" date="2015" name="Plant Physiol.">
        <title>Identification of Open Stomata1-interacting proteins reveals interactions with sucrose non-fermenting1-related protein kinases2 and with type 2a protein phosphatases that function in abscisic acid responses.</title>
        <authorList>
            <person name="Waadt R."/>
            <person name="Manalansan B."/>
            <person name="Rauniyar N."/>
            <person name="Munemasa S."/>
            <person name="Booker M.A."/>
            <person name="Brandt B."/>
            <person name="Waadt C."/>
            <person name="Nusinow D.A."/>
            <person name="Kay S.A."/>
            <person name="Kunz H.H."/>
            <person name="Schumacher K."/>
            <person name="DeLong A."/>
            <person name="Yates J.R. III"/>
            <person name="Schroeder J.I."/>
        </authorList>
    </citation>
    <scope>IDENTIFICATION BY MASS SPECTROMETRY</scope>
    <scope>INTERACTION WITH SRK2E/OST1</scope>
</reference>
<reference key="9">
    <citation type="journal article" date="2016" name="Mol. Plant">
        <title>The brassinosteroid-activated BRI1 receptor kinase is switched off by dephosphorylation mediated by cytoplasm-localized PP2A B' subunits.</title>
        <authorList>
            <person name="Wang R."/>
            <person name="Liu M."/>
            <person name="Yuan M."/>
            <person name="Oses-Prieto J.A."/>
            <person name="Cai X."/>
            <person name="Sun Y."/>
            <person name="Burlingame A.L."/>
            <person name="Wang Z.Y."/>
            <person name="Tang W."/>
        </authorList>
    </citation>
    <scope>INTERACTION WITH BRI1</scope>
    <scope>SUBCELLULAR LOCATION</scope>
</reference>
<comment type="function">
    <text evidence="1 3">The B regulatory subunit may modulate substrate selectivity and catalytic activity, and may also direct the localization of the catalytic enzyme to a particular subcellular compartment (By similarity). Required for the formation of the PP2A holoenzyme that positively regulates brassinosteroid signaling by dephosphorylating and activating BZR1 (PubMed:21258370).</text>
</comment>
<comment type="subunit">
    <text evidence="3 4 5 8">PP2A consists of a common heteromeric enzyme, composed of a catalytic subunit (subunits C), a constant regulatory subunit (subunit A), and a variety of regulatory subunits such as subunits B (the R2/B/PR55/B55, R3/B''/PR72/PR130/PR59 and R5/B'/B56 families) (Probable). Interacts with BZR1 (PubMed:21258370). Interacts with BRI1 (PubMed:26517938). Interacts with SRK2E/OST1 (PubMed:26175513).</text>
</comment>
<comment type="subcellular location">
    <subcellularLocation>
        <location evidence="5">Nucleus</location>
    </subcellularLocation>
    <subcellularLocation>
        <location evidence="5">Cytoplasm</location>
    </subcellularLocation>
</comment>
<comment type="tissue specificity">
    <text evidence="6">Expressed ubiquitously, higher levels in leaves.</text>
</comment>
<comment type="similarity">
    <text evidence="7">Belongs to the phosphatase 2A regulatory subunit B56 family.</text>
</comment>
<name>2A5A_ARATH</name>
<protein>
    <recommendedName>
        <fullName>Serine/threonine protein phosphatase 2A 57 kDa regulatory subunit B' alpha isoform</fullName>
        <shortName>AtB' alpha</shortName>
        <shortName>PP2A, B' subunit, alpha isoform</shortName>
    </recommendedName>
</protein>
<proteinExistence type="evidence at protein level"/>
<accession>O04375</accession>